<organism>
    <name type="scientific">Granulibacter bethesdensis (strain ATCC BAA-1260 / CGDNIH1)</name>
    <dbReference type="NCBI Taxonomy" id="391165"/>
    <lineage>
        <taxon>Bacteria</taxon>
        <taxon>Pseudomonadati</taxon>
        <taxon>Pseudomonadota</taxon>
        <taxon>Alphaproteobacteria</taxon>
        <taxon>Acetobacterales</taxon>
        <taxon>Acetobacteraceae</taxon>
        <taxon>Granulibacter</taxon>
    </lineage>
</organism>
<protein>
    <recommendedName>
        <fullName evidence="1">Large ribosomal subunit protein bL19</fullName>
    </recommendedName>
    <alternativeName>
        <fullName evidence="2">50S ribosomal protein L19</fullName>
    </alternativeName>
</protein>
<feature type="chain" id="PRO_1000049681" description="Large ribosomal subunit protein bL19">
    <location>
        <begin position="1"/>
        <end position="129"/>
    </location>
</feature>
<accession>Q0BRH2</accession>
<dbReference type="EMBL" id="CP000394">
    <property type="protein sequence ID" value="ABI62580.1"/>
    <property type="molecule type" value="Genomic_DNA"/>
</dbReference>
<dbReference type="RefSeq" id="WP_011632384.1">
    <property type="nucleotide sequence ID" value="NC_008343.2"/>
</dbReference>
<dbReference type="SMR" id="Q0BRH2"/>
<dbReference type="STRING" id="391165.GbCGDNIH1_1682"/>
<dbReference type="KEGG" id="gbe:GbCGDNIH1_1682"/>
<dbReference type="eggNOG" id="COG0335">
    <property type="taxonomic scope" value="Bacteria"/>
</dbReference>
<dbReference type="HOGENOM" id="CLU_103507_1_0_5"/>
<dbReference type="OrthoDB" id="9803541at2"/>
<dbReference type="Proteomes" id="UP000001963">
    <property type="component" value="Chromosome"/>
</dbReference>
<dbReference type="GO" id="GO:0022625">
    <property type="term" value="C:cytosolic large ribosomal subunit"/>
    <property type="evidence" value="ECO:0007669"/>
    <property type="project" value="TreeGrafter"/>
</dbReference>
<dbReference type="GO" id="GO:0003735">
    <property type="term" value="F:structural constituent of ribosome"/>
    <property type="evidence" value="ECO:0007669"/>
    <property type="project" value="InterPro"/>
</dbReference>
<dbReference type="GO" id="GO:0006412">
    <property type="term" value="P:translation"/>
    <property type="evidence" value="ECO:0007669"/>
    <property type="project" value="UniProtKB-UniRule"/>
</dbReference>
<dbReference type="FunFam" id="2.30.30.790:FF:000001">
    <property type="entry name" value="50S ribosomal protein L19"/>
    <property type="match status" value="1"/>
</dbReference>
<dbReference type="Gene3D" id="2.30.30.790">
    <property type="match status" value="1"/>
</dbReference>
<dbReference type="HAMAP" id="MF_00402">
    <property type="entry name" value="Ribosomal_bL19"/>
    <property type="match status" value="1"/>
</dbReference>
<dbReference type="InterPro" id="IPR001857">
    <property type="entry name" value="Ribosomal_bL19"/>
</dbReference>
<dbReference type="InterPro" id="IPR018257">
    <property type="entry name" value="Ribosomal_bL19_CS"/>
</dbReference>
<dbReference type="InterPro" id="IPR038657">
    <property type="entry name" value="Ribosomal_bL19_sf"/>
</dbReference>
<dbReference type="InterPro" id="IPR008991">
    <property type="entry name" value="Translation_prot_SH3-like_sf"/>
</dbReference>
<dbReference type="NCBIfam" id="TIGR01024">
    <property type="entry name" value="rplS_bact"/>
    <property type="match status" value="1"/>
</dbReference>
<dbReference type="PANTHER" id="PTHR15680:SF9">
    <property type="entry name" value="LARGE RIBOSOMAL SUBUNIT PROTEIN BL19M"/>
    <property type="match status" value="1"/>
</dbReference>
<dbReference type="PANTHER" id="PTHR15680">
    <property type="entry name" value="RIBOSOMAL PROTEIN L19"/>
    <property type="match status" value="1"/>
</dbReference>
<dbReference type="Pfam" id="PF01245">
    <property type="entry name" value="Ribosomal_L19"/>
    <property type="match status" value="1"/>
</dbReference>
<dbReference type="PIRSF" id="PIRSF002191">
    <property type="entry name" value="Ribosomal_L19"/>
    <property type="match status" value="1"/>
</dbReference>
<dbReference type="PRINTS" id="PR00061">
    <property type="entry name" value="RIBOSOMALL19"/>
</dbReference>
<dbReference type="SUPFAM" id="SSF50104">
    <property type="entry name" value="Translation proteins SH3-like domain"/>
    <property type="match status" value="1"/>
</dbReference>
<dbReference type="PROSITE" id="PS01015">
    <property type="entry name" value="RIBOSOMAL_L19"/>
    <property type="match status" value="1"/>
</dbReference>
<evidence type="ECO:0000255" key="1">
    <source>
        <dbReference type="HAMAP-Rule" id="MF_00402"/>
    </source>
</evidence>
<evidence type="ECO:0000305" key="2"/>
<comment type="function">
    <text evidence="1">This protein is located at the 30S-50S ribosomal subunit interface and may play a role in the structure and function of the aminoacyl-tRNA binding site.</text>
</comment>
<comment type="similarity">
    <text evidence="1">Belongs to the bacterial ribosomal protein bL19 family.</text>
</comment>
<sequence length="129" mass="14460">MNIIQTFEAEQIARLVSERPVPEFVPGDTLRVLVKVVEGERTRTQAFEGVCIARSNRGVNSNFTIRKISYGEGVERVFPLYSPTIAEIQVVRRGDVRRAKLYYLRGRSGKSARIAEKARSTTTETAAAE</sequence>
<reference key="1">
    <citation type="journal article" date="2007" name="J. Bacteriol.">
        <title>Genome sequence analysis of the emerging human pathogenic acetic acid bacterium Granulibacter bethesdensis.</title>
        <authorList>
            <person name="Greenberg D.E."/>
            <person name="Porcella S.F."/>
            <person name="Zelazny A.M."/>
            <person name="Virtaneva K."/>
            <person name="Sturdevant D.E."/>
            <person name="Kupko J.J. III"/>
            <person name="Barbian K.D."/>
            <person name="Babar A."/>
            <person name="Dorward D.W."/>
            <person name="Holland S.M."/>
        </authorList>
    </citation>
    <scope>NUCLEOTIDE SEQUENCE [LARGE SCALE GENOMIC DNA]</scope>
    <source>
        <strain>ATCC BAA-1260 / CGDNIH1</strain>
    </source>
</reference>
<proteinExistence type="inferred from homology"/>
<name>RL19_GRABC</name>
<gene>
    <name evidence="1" type="primary">rplS</name>
    <name type="ordered locus">GbCGDNIH1_1682</name>
</gene>
<keyword id="KW-1185">Reference proteome</keyword>
<keyword id="KW-0687">Ribonucleoprotein</keyword>
<keyword id="KW-0689">Ribosomal protein</keyword>